<organism>
    <name type="scientific">Caenorhabditis elegans</name>
    <dbReference type="NCBI Taxonomy" id="6239"/>
    <lineage>
        <taxon>Eukaryota</taxon>
        <taxon>Metazoa</taxon>
        <taxon>Ecdysozoa</taxon>
        <taxon>Nematoda</taxon>
        <taxon>Chromadorea</taxon>
        <taxon>Rhabditida</taxon>
        <taxon>Rhabditina</taxon>
        <taxon>Rhabditomorpha</taxon>
        <taxon>Rhabditoidea</taxon>
        <taxon>Rhabditidae</taxon>
        <taxon>Peloderinae</taxon>
        <taxon>Caenorhabditis</taxon>
    </lineage>
</organism>
<sequence length="1056" mass="118523">MISDDDDLPSTRPGSVNEELPETEPEDNDELPETEPESDSDKPTVTSNKTENQVADEDYDSFDDFVPSQTHTASKIPVKNKRAKKCTVESDSSSSDDSDQGDDCEFIPACDETQEVPKIKRGYTLRTRASVKNKCDDSWDDGIDEEDVSKRSEDTLNDSFVDPEFMDSVLDNQLTIKGKKQFLDDGEFFTDRNVPQIDEATKMKWASMTSPPQEALNALNEFFGHKGFREKQWDVVRNVLGGKDQFVLMSTGYGKSVCYQLPSLLLNSMTVVVSPLISLMNDQVTTLVSKGIDAVKLDGHSTQIEWDQVANNMHRIRFIYMSPEMVTSQKGLELLTSCRKHISLLAIDEAHCVSQWGHDFRNSYRHLAEIRNRSDLCNIPMIALTATATVRVRDDVIANLRLRKPLITTTSFDRKNLYISVHSSKDMAEDLGLFMKTDEVKGRHFGGPTIIYCQTKQMVDDVNCVLRRIGVRSAHYHAGLTKNQREKAHTDFMRDKITTIVATVAFGMGIDKPDVRNVIHYGCPNNIESYYQEIGRAGRDGSPSICRVFWAPKDLNTIKFKLRNSQQKEEVVENLTMMLRQLELVLTTVGCRRYQLLKHFDPSYAKPPTMQADCCDRCTEMLNGNQDSSSSIVDVTTESKWLFQVINEMYNGKTGIGKPIEFLRGSSKEDWRIKTTSQQKLFGIGKHIPDKWWKALAASLRIAGYLGEVRLMQMKFGSCITLSELGERWLLTGKEMKIDATPILLQGKKEKAAPSTVPGASRSQSTKSSTEIPTKILGANKIREYEPANENEQLMNLKKQEVTGLPEKIDQLRSRLDDIRVGIANMHEVAPFQIVSNTVLDCFANLRPTSASNLEMIDGMSAQQKSRYGKRFVDCVVQFSKETGIATNVNANDMIPPELISKMQKVLSDAVRRVYTEHLISRSTAKEVATARGISEGTVYSYLAMAVEKGLPLHLDKLNVSRKNIAMALNAVRVHLGSNVAVLTPWVEAMGVVPDFNQLKLIRAILIYEYGLDTSENQEKPDIQSMPSTSNPSTIKTVPSTPSSSLRAPPLKKFKL</sequence>
<name>WRN_CAEEL</name>
<accession>Q19546</accession>
<proteinExistence type="inferred from homology"/>
<evidence type="ECO:0000250" key="1"/>
<evidence type="ECO:0000250" key="2">
    <source>
        <dbReference type="UniProtKB" id="Q14191"/>
    </source>
</evidence>
<evidence type="ECO:0000255" key="3">
    <source>
        <dbReference type="PROSITE-ProRule" id="PRU00328"/>
    </source>
</evidence>
<evidence type="ECO:0000255" key="4">
    <source>
        <dbReference type="PROSITE-ProRule" id="PRU00541"/>
    </source>
</evidence>
<evidence type="ECO:0000255" key="5">
    <source>
        <dbReference type="PROSITE-ProRule" id="PRU00542"/>
    </source>
</evidence>
<evidence type="ECO:0000256" key="6">
    <source>
        <dbReference type="SAM" id="MobiDB-lite"/>
    </source>
</evidence>
<evidence type="ECO:0000269" key="7">
    <source>
    </source>
</evidence>
<evidence type="ECO:0000305" key="8"/>
<gene>
    <name type="primary">wrn-1</name>
    <name type="ORF">F18C5.2</name>
</gene>
<protein>
    <recommendedName>
        <fullName evidence="8">ATP-dependent helicase wrn-1</fullName>
        <ecNumber evidence="2">5.6.2.4</ecNumber>
    </recommendedName>
    <alternativeName>
        <fullName evidence="8">DNA 3'-5' helicase wrn</fullName>
    </alternativeName>
    <alternativeName>
        <fullName evidence="8">Werner syndrome protein homolog</fullName>
    </alternativeName>
</protein>
<keyword id="KW-0067">ATP-binding</keyword>
<keyword id="KW-0238">DNA-binding</keyword>
<keyword id="KW-0347">Helicase</keyword>
<keyword id="KW-0378">Hydrolase</keyword>
<keyword id="KW-0413">Isomerase</keyword>
<keyword id="KW-0479">Metal-binding</keyword>
<keyword id="KW-0547">Nucleotide-binding</keyword>
<keyword id="KW-0539">Nucleus</keyword>
<keyword id="KW-1185">Reference proteome</keyword>
<keyword id="KW-0677">Repeat</keyword>
<keyword id="KW-0862">Zinc</keyword>
<feature type="chain" id="PRO_0000205048" description="ATP-dependent helicase wrn-1">
    <location>
        <begin position="1"/>
        <end position="1056"/>
    </location>
</feature>
<feature type="repeat" description="1" evidence="7">
    <location>
        <begin position="17"/>
        <end position="26"/>
    </location>
</feature>
<feature type="repeat" description="2" evidence="7">
    <location>
        <begin position="28"/>
        <end position="37"/>
    </location>
</feature>
<feature type="domain" description="Helicase ATP-binding" evidence="4">
    <location>
        <begin position="236"/>
        <end position="406"/>
    </location>
</feature>
<feature type="domain" description="Helicase C-terminal" evidence="5">
    <location>
        <begin position="427"/>
        <end position="583"/>
    </location>
</feature>
<feature type="domain" description="HRDC" evidence="3 8">
    <location>
        <begin position="806"/>
        <end position="886"/>
    </location>
</feature>
<feature type="region of interest" description="Disordered" evidence="6">
    <location>
        <begin position="1"/>
        <end position="102"/>
    </location>
</feature>
<feature type="region of interest" description="2 X 10 AA repeats of N-[ED]-E-L-P-E-T-E-P-E">
    <location>
        <begin position="17"/>
        <end position="37"/>
    </location>
</feature>
<feature type="region of interest" description="Disordered" evidence="6">
    <location>
        <begin position="749"/>
        <end position="771"/>
    </location>
</feature>
<feature type="region of interest" description="Disordered" evidence="6">
    <location>
        <begin position="1018"/>
        <end position="1056"/>
    </location>
</feature>
<feature type="short sequence motif" description="DEAH box" evidence="4">
    <location>
        <begin position="348"/>
        <end position="351"/>
    </location>
</feature>
<feature type="compositionally biased region" description="Acidic residues" evidence="6">
    <location>
        <begin position="19"/>
        <end position="38"/>
    </location>
</feature>
<feature type="compositionally biased region" description="Polar residues" evidence="6">
    <location>
        <begin position="43"/>
        <end position="53"/>
    </location>
</feature>
<feature type="compositionally biased region" description="Acidic residues" evidence="6">
    <location>
        <begin position="54"/>
        <end position="63"/>
    </location>
</feature>
<feature type="compositionally biased region" description="Polar residues" evidence="6">
    <location>
        <begin position="761"/>
        <end position="771"/>
    </location>
</feature>
<feature type="compositionally biased region" description="Polar residues" evidence="6">
    <location>
        <begin position="1025"/>
        <end position="1046"/>
    </location>
</feature>
<feature type="binding site" evidence="4">
    <location>
        <begin position="249"/>
        <end position="256"/>
    </location>
    <ligand>
        <name>ATP</name>
        <dbReference type="ChEBI" id="CHEBI:30616"/>
    </ligand>
</feature>
<feature type="binding site" evidence="2">
    <location>
        <position position="591"/>
    </location>
    <ligand>
        <name>Zn(2+)</name>
        <dbReference type="ChEBI" id="CHEBI:29105"/>
    </ligand>
</feature>
<feature type="binding site" evidence="2">
    <location>
        <position position="614"/>
    </location>
    <ligand>
        <name>Zn(2+)</name>
        <dbReference type="ChEBI" id="CHEBI:29105"/>
    </ligand>
</feature>
<feature type="binding site" evidence="2">
    <location>
        <position position="615"/>
    </location>
    <ligand>
        <name>Zn(2+)</name>
        <dbReference type="ChEBI" id="CHEBI:29105"/>
    </ligand>
</feature>
<feature type="binding site" evidence="2">
    <location>
        <position position="618"/>
    </location>
    <ligand>
        <name>Zn(2+)</name>
        <dbReference type="ChEBI" id="CHEBI:29105"/>
    </ligand>
</feature>
<reference key="1">
    <citation type="journal article" date="1998" name="Science">
        <title>Genome sequence of the nematode C. elegans: a platform for investigating biology.</title>
        <authorList>
            <consortium name="The C. elegans sequencing consortium"/>
        </authorList>
    </citation>
    <scope>NUCLEOTIDE SEQUENCE [LARGE SCALE GENOMIC DNA]</scope>
    <source>
        <strain>Bristol N2</strain>
    </source>
</reference>
<reference evidence="8" key="2">
    <citation type="journal article" date="1999" name="Genetics">
        <title>Evolution of the RECQ family of helicases: a Drosophila homolog, Dmblm, is similar to the human Bloom syndrome gene.</title>
        <authorList>
            <person name="Kusano K."/>
            <person name="Berres M.E."/>
            <person name="Engels W.R."/>
        </authorList>
    </citation>
    <scope>REPEATS</scope>
</reference>
<dbReference type="EC" id="5.6.2.4" evidence="2"/>
<dbReference type="EMBL" id="FO080970">
    <property type="protein sequence ID" value="CCD68193.1"/>
    <property type="molecule type" value="Genomic_DNA"/>
</dbReference>
<dbReference type="PIR" id="T16087">
    <property type="entry name" value="T16087"/>
</dbReference>
<dbReference type="RefSeq" id="NP_495324.2">
    <property type="nucleotide sequence ID" value="NM_062923.5"/>
</dbReference>
<dbReference type="SMR" id="Q19546"/>
<dbReference type="BioGRID" id="39420">
    <property type="interactions" value="14"/>
</dbReference>
<dbReference type="FunCoup" id="Q19546">
    <property type="interactions" value="1816"/>
</dbReference>
<dbReference type="IntAct" id="Q19546">
    <property type="interactions" value="4"/>
</dbReference>
<dbReference type="MINT" id="Q19546"/>
<dbReference type="STRING" id="6239.F18C5.2.1"/>
<dbReference type="PaxDb" id="6239-F18C5.2"/>
<dbReference type="PeptideAtlas" id="Q19546"/>
<dbReference type="EnsemblMetazoa" id="F18C5.2.1">
    <property type="protein sequence ID" value="F18C5.2.1"/>
    <property type="gene ID" value="WBGene00006944"/>
</dbReference>
<dbReference type="GeneID" id="174081"/>
<dbReference type="KEGG" id="cel:CELE_F18C5.2"/>
<dbReference type="UCSC" id="F18C5.2">
    <property type="organism name" value="c. elegans"/>
</dbReference>
<dbReference type="AGR" id="WB:WBGene00006944"/>
<dbReference type="CTD" id="174081"/>
<dbReference type="WormBase" id="F18C5.2">
    <property type="protein sequence ID" value="CE31791"/>
    <property type="gene ID" value="WBGene00006944"/>
    <property type="gene designation" value="wrn-1"/>
</dbReference>
<dbReference type="eggNOG" id="KOG0351">
    <property type="taxonomic scope" value="Eukaryota"/>
</dbReference>
<dbReference type="GeneTree" id="ENSGT00940000159168"/>
<dbReference type="HOGENOM" id="CLU_001103_14_3_1"/>
<dbReference type="InParanoid" id="Q19546"/>
<dbReference type="OMA" id="VGLTHEI"/>
<dbReference type="OrthoDB" id="10013439at2759"/>
<dbReference type="PhylomeDB" id="Q19546"/>
<dbReference type="BRENDA" id="3.6.4.12">
    <property type="organism ID" value="1045"/>
</dbReference>
<dbReference type="Reactome" id="R-CEL-5693607">
    <property type="pathway name" value="Processing of DNA double-strand break ends"/>
</dbReference>
<dbReference type="PRO" id="PR:Q19546"/>
<dbReference type="Proteomes" id="UP000001940">
    <property type="component" value="Chromosome II"/>
</dbReference>
<dbReference type="Bgee" id="WBGene00006944">
    <property type="expression patterns" value="Expressed in germ line (C elegans) and 4 other cell types or tissues"/>
</dbReference>
<dbReference type="GO" id="GO:0005694">
    <property type="term" value="C:chromosome"/>
    <property type="evidence" value="ECO:0000314"/>
    <property type="project" value="WormBase"/>
</dbReference>
<dbReference type="GO" id="GO:0005737">
    <property type="term" value="C:cytoplasm"/>
    <property type="evidence" value="ECO:0000318"/>
    <property type="project" value="GO_Central"/>
</dbReference>
<dbReference type="GO" id="GO:0005654">
    <property type="term" value="C:nucleoplasm"/>
    <property type="evidence" value="ECO:0000314"/>
    <property type="project" value="WormBase"/>
</dbReference>
<dbReference type="GO" id="GO:0005634">
    <property type="term" value="C:nucleus"/>
    <property type="evidence" value="ECO:0000314"/>
    <property type="project" value="WormBase"/>
</dbReference>
<dbReference type="GO" id="GO:0035861">
    <property type="term" value="C:site of double-strand break"/>
    <property type="evidence" value="ECO:0000314"/>
    <property type="project" value="WormBase"/>
</dbReference>
<dbReference type="GO" id="GO:0043138">
    <property type="term" value="F:3'-5' DNA helicase activity"/>
    <property type="evidence" value="ECO:0000314"/>
    <property type="project" value="WormBase"/>
</dbReference>
<dbReference type="GO" id="GO:0005524">
    <property type="term" value="F:ATP binding"/>
    <property type="evidence" value="ECO:0007669"/>
    <property type="project" value="UniProtKB-KW"/>
</dbReference>
<dbReference type="GO" id="GO:0016887">
    <property type="term" value="F:ATP hydrolysis activity"/>
    <property type="evidence" value="ECO:0007669"/>
    <property type="project" value="RHEA"/>
</dbReference>
<dbReference type="GO" id="GO:0003677">
    <property type="term" value="F:DNA binding"/>
    <property type="evidence" value="ECO:0007669"/>
    <property type="project" value="UniProtKB-KW"/>
</dbReference>
<dbReference type="GO" id="GO:0009378">
    <property type="term" value="F:four-way junction helicase activity"/>
    <property type="evidence" value="ECO:0000318"/>
    <property type="project" value="GO_Central"/>
</dbReference>
<dbReference type="GO" id="GO:0046872">
    <property type="term" value="F:metal ion binding"/>
    <property type="evidence" value="ECO:0007669"/>
    <property type="project" value="UniProtKB-KW"/>
</dbReference>
<dbReference type="GO" id="GO:0008340">
    <property type="term" value="P:determination of adult lifespan"/>
    <property type="evidence" value="ECO:0000315"/>
    <property type="project" value="WormBase"/>
</dbReference>
<dbReference type="GO" id="GO:0006259">
    <property type="term" value="P:DNA metabolic process"/>
    <property type="evidence" value="ECO:0000314"/>
    <property type="project" value="WormBase"/>
</dbReference>
<dbReference type="GO" id="GO:0006260">
    <property type="term" value="P:DNA replication"/>
    <property type="evidence" value="ECO:0000318"/>
    <property type="project" value="GO_Central"/>
</dbReference>
<dbReference type="GO" id="GO:0000724">
    <property type="term" value="P:double-strand break repair via homologous recombination"/>
    <property type="evidence" value="ECO:0000318"/>
    <property type="project" value="GO_Central"/>
</dbReference>
<dbReference type="GO" id="GO:0010212">
    <property type="term" value="P:response to ionizing radiation"/>
    <property type="evidence" value="ECO:0000315"/>
    <property type="project" value="WormBase"/>
</dbReference>
<dbReference type="GO" id="GO:0000723">
    <property type="term" value="P:telomere maintenance"/>
    <property type="evidence" value="ECO:0000318"/>
    <property type="project" value="GO_Central"/>
</dbReference>
<dbReference type="CDD" id="cd18794">
    <property type="entry name" value="SF2_C_RecQ"/>
    <property type="match status" value="1"/>
</dbReference>
<dbReference type="FunFam" id="1.10.10.10:FF:000513">
    <property type="entry name" value="ATP-dependent DNA helicase"/>
    <property type="match status" value="1"/>
</dbReference>
<dbReference type="FunFam" id="3.40.50.300:FF:003431">
    <property type="entry name" value="ATP-dependent DNA helicase"/>
    <property type="match status" value="1"/>
</dbReference>
<dbReference type="FunFam" id="3.40.50.300:FF:001389">
    <property type="entry name" value="ATP-dependent DNA helicase RecQ"/>
    <property type="match status" value="1"/>
</dbReference>
<dbReference type="Gene3D" id="1.10.150.80">
    <property type="entry name" value="HRDC domain"/>
    <property type="match status" value="1"/>
</dbReference>
<dbReference type="Gene3D" id="3.40.50.300">
    <property type="entry name" value="P-loop containing nucleotide triphosphate hydrolases"/>
    <property type="match status" value="2"/>
</dbReference>
<dbReference type="Gene3D" id="1.10.10.10">
    <property type="entry name" value="Winged helix-like DNA-binding domain superfamily/Winged helix DNA-binding domain"/>
    <property type="match status" value="1"/>
</dbReference>
<dbReference type="InterPro" id="IPR011545">
    <property type="entry name" value="DEAD/DEAH_box_helicase_dom"/>
</dbReference>
<dbReference type="InterPro" id="IPR004589">
    <property type="entry name" value="DNA_helicase_ATP-dep_RecQ"/>
</dbReference>
<dbReference type="InterPro" id="IPR014001">
    <property type="entry name" value="Helicase_ATP-bd"/>
</dbReference>
<dbReference type="InterPro" id="IPR001650">
    <property type="entry name" value="Helicase_C-like"/>
</dbReference>
<dbReference type="InterPro" id="IPR029491">
    <property type="entry name" value="Helicase_HTH"/>
</dbReference>
<dbReference type="InterPro" id="IPR010997">
    <property type="entry name" value="HRDC-like_sf"/>
</dbReference>
<dbReference type="InterPro" id="IPR002121">
    <property type="entry name" value="HRDC_dom"/>
</dbReference>
<dbReference type="InterPro" id="IPR044876">
    <property type="entry name" value="HRDC_dom_sf"/>
</dbReference>
<dbReference type="InterPro" id="IPR027417">
    <property type="entry name" value="P-loop_NTPase"/>
</dbReference>
<dbReference type="InterPro" id="IPR032284">
    <property type="entry name" value="RecQ_Zn-bd"/>
</dbReference>
<dbReference type="InterPro" id="IPR018982">
    <property type="entry name" value="RQC_domain"/>
</dbReference>
<dbReference type="InterPro" id="IPR036388">
    <property type="entry name" value="WH-like_DNA-bd_sf"/>
</dbReference>
<dbReference type="InterPro" id="IPR036390">
    <property type="entry name" value="WH_DNA-bd_sf"/>
</dbReference>
<dbReference type="NCBIfam" id="TIGR00614">
    <property type="entry name" value="recQ_fam"/>
    <property type="match status" value="1"/>
</dbReference>
<dbReference type="PANTHER" id="PTHR13710:SF120">
    <property type="entry name" value="BIFUNCTIONAL 3'-5' EXONUCLEASE_ATP-DEPENDENT HELICASE WRN"/>
    <property type="match status" value="1"/>
</dbReference>
<dbReference type="PANTHER" id="PTHR13710">
    <property type="entry name" value="DNA HELICASE RECQ FAMILY MEMBER"/>
    <property type="match status" value="1"/>
</dbReference>
<dbReference type="Pfam" id="PF00270">
    <property type="entry name" value="DEAD"/>
    <property type="match status" value="1"/>
</dbReference>
<dbReference type="Pfam" id="PF00271">
    <property type="entry name" value="Helicase_C"/>
    <property type="match status" value="1"/>
</dbReference>
<dbReference type="Pfam" id="PF00570">
    <property type="entry name" value="HRDC"/>
    <property type="match status" value="1"/>
</dbReference>
<dbReference type="Pfam" id="PF14493">
    <property type="entry name" value="HTH_40"/>
    <property type="match status" value="1"/>
</dbReference>
<dbReference type="Pfam" id="PF16124">
    <property type="entry name" value="RecQ_Zn_bind"/>
    <property type="match status" value="1"/>
</dbReference>
<dbReference type="Pfam" id="PF09382">
    <property type="entry name" value="RQC"/>
    <property type="match status" value="1"/>
</dbReference>
<dbReference type="SMART" id="SM00487">
    <property type="entry name" value="DEXDc"/>
    <property type="match status" value="1"/>
</dbReference>
<dbReference type="SMART" id="SM00490">
    <property type="entry name" value="HELICc"/>
    <property type="match status" value="1"/>
</dbReference>
<dbReference type="SMART" id="SM00341">
    <property type="entry name" value="HRDC"/>
    <property type="match status" value="1"/>
</dbReference>
<dbReference type="SMART" id="SM00956">
    <property type="entry name" value="RQC"/>
    <property type="match status" value="1"/>
</dbReference>
<dbReference type="SUPFAM" id="SSF47819">
    <property type="entry name" value="HRDC-like"/>
    <property type="match status" value="1"/>
</dbReference>
<dbReference type="SUPFAM" id="SSF52540">
    <property type="entry name" value="P-loop containing nucleoside triphosphate hydrolases"/>
    <property type="match status" value="1"/>
</dbReference>
<dbReference type="SUPFAM" id="SSF46785">
    <property type="entry name" value="Winged helix' DNA-binding domain"/>
    <property type="match status" value="1"/>
</dbReference>
<dbReference type="PROSITE" id="PS51192">
    <property type="entry name" value="HELICASE_ATP_BIND_1"/>
    <property type="match status" value="1"/>
</dbReference>
<dbReference type="PROSITE" id="PS51194">
    <property type="entry name" value="HELICASE_CTER"/>
    <property type="match status" value="1"/>
</dbReference>
<dbReference type="PROSITE" id="PS50967">
    <property type="entry name" value="HRDC"/>
    <property type="match status" value="1"/>
</dbReference>
<comment type="function">
    <text evidence="1">Essential for the formation of DNA replication focal centers; stably associates with foci elements generating binding sites for RP-A. Exhibits a magnesium-dependent ATP-dependent 3'-5' DNA-helicase activity. May be involved in the control of genomic stability (By similarity).</text>
</comment>
<comment type="catalytic activity">
    <reaction evidence="2">
        <text>Couples ATP hydrolysis with the unwinding of duplex DNA by translocating in the 3'-5' direction.</text>
        <dbReference type="EC" id="5.6.2.4"/>
    </reaction>
</comment>
<comment type="catalytic activity">
    <reaction>
        <text>ATP + H2O = ADP + phosphate + H(+)</text>
        <dbReference type="Rhea" id="RHEA:13065"/>
        <dbReference type="ChEBI" id="CHEBI:15377"/>
        <dbReference type="ChEBI" id="CHEBI:15378"/>
        <dbReference type="ChEBI" id="CHEBI:30616"/>
        <dbReference type="ChEBI" id="CHEBI:43474"/>
        <dbReference type="ChEBI" id="CHEBI:456216"/>
    </reaction>
</comment>
<comment type="cofactor">
    <cofactor evidence="2">
        <name>Zn(2+)</name>
        <dbReference type="ChEBI" id="CHEBI:29105"/>
    </cofactor>
    <text evidence="2">Binds a Zn(2+) ion per subunit.</text>
</comment>
<comment type="subcellular location">
    <subcellularLocation>
        <location evidence="2">Nucleus</location>
    </subcellularLocation>
</comment>
<comment type="miscellaneous">
    <text evidence="8">Unlike orthologs in vertebrates, this protein does not have an exonuclease domain.</text>
</comment>
<comment type="similarity">
    <text evidence="8">Belongs to the helicase family. RecQ subfamily.</text>
</comment>